<keyword id="KW-0256">Endoplasmic reticulum</keyword>
<keyword id="KW-0472">Membrane</keyword>
<keyword id="KW-0539">Nucleus</keyword>
<keyword id="KW-1185">Reference proteome</keyword>
<keyword id="KW-0812">Transmembrane</keyword>
<keyword id="KW-1133">Transmembrane helix</keyword>
<dbReference type="EMBL" id="CR382128">
    <property type="protein sequence ID" value="CAG83007.1"/>
    <property type="molecule type" value="Genomic_DNA"/>
</dbReference>
<dbReference type="RefSeq" id="XP_500760.1">
    <property type="nucleotide sequence ID" value="XM_500760.1"/>
</dbReference>
<dbReference type="SMR" id="Q6CF02"/>
<dbReference type="FunCoup" id="Q6CF02">
    <property type="interactions" value="310"/>
</dbReference>
<dbReference type="STRING" id="284591.Q6CF02"/>
<dbReference type="EnsemblFungi" id="CAG83007">
    <property type="protein sequence ID" value="CAG83007"/>
    <property type="gene ID" value="YALI0_B11440g"/>
</dbReference>
<dbReference type="KEGG" id="yli:2907489"/>
<dbReference type="VEuPathDB" id="FungiDB:YALI0_B11440g"/>
<dbReference type="HOGENOM" id="CLU_064541_0_1_1"/>
<dbReference type="InParanoid" id="Q6CF02"/>
<dbReference type="OMA" id="CRIVFIE"/>
<dbReference type="OrthoDB" id="7504at4891"/>
<dbReference type="Proteomes" id="UP000001300">
    <property type="component" value="Chromosome B"/>
</dbReference>
<dbReference type="GO" id="GO:0031965">
    <property type="term" value="C:nuclear membrane"/>
    <property type="evidence" value="ECO:0007669"/>
    <property type="project" value="UniProtKB-SubCell"/>
</dbReference>
<dbReference type="GO" id="GO:0043541">
    <property type="term" value="C:UDP-N-acetylglucosamine transferase complex"/>
    <property type="evidence" value="ECO:0000318"/>
    <property type="project" value="GO_Central"/>
</dbReference>
<dbReference type="GO" id="GO:0006488">
    <property type="term" value="P:dolichol-linked oligosaccharide biosynthetic process"/>
    <property type="evidence" value="ECO:0000318"/>
    <property type="project" value="GO_Central"/>
</dbReference>
<dbReference type="Gene3D" id="3.40.50.2000">
    <property type="entry name" value="Glycogen Phosphorylase B"/>
    <property type="match status" value="1"/>
</dbReference>
<dbReference type="InterPro" id="IPR013969">
    <property type="entry name" value="Oligosacch_biosynth_Alg14"/>
</dbReference>
<dbReference type="PANTHER" id="PTHR12154">
    <property type="entry name" value="GLYCOSYL TRANSFERASE-RELATED"/>
    <property type="match status" value="1"/>
</dbReference>
<dbReference type="PANTHER" id="PTHR12154:SF4">
    <property type="entry name" value="UDP-N-ACETYLGLUCOSAMINE TRANSFERASE SUBUNIT ALG14 HOMOLOG"/>
    <property type="match status" value="1"/>
</dbReference>
<dbReference type="Pfam" id="PF08660">
    <property type="entry name" value="Alg14"/>
    <property type="match status" value="1"/>
</dbReference>
<proteinExistence type="inferred from homology"/>
<name>ALG14_YARLI</name>
<sequence>MVTTILIAASAILVLLLLRLLFVLPASNRFGFLYRPKHSNPKLMVMMGSGGHTGEMLRMLKTLKLQSYAKRVYVSSSGDVDSLEKVKVLESTTKTDIKTMVLENIPRARKVGQSYPSSVITSAVSFAVAVKLVHKHKPHVIVCNGPATCVMLCYAAFLLRFMALIDTRIIYVESLARVNRLSLSGLILLPFCDRFLVQWPQLAEKYPRAEYHGILV</sequence>
<protein>
    <recommendedName>
        <fullName>UDP-N-acetylglucosamine transferase subunit ALG14</fullName>
    </recommendedName>
    <alternativeName>
        <fullName>Asparagine-linked glycosylation protein 14</fullName>
    </alternativeName>
</protein>
<evidence type="ECO:0000250" key="1"/>
<evidence type="ECO:0000250" key="2">
    <source>
        <dbReference type="UniProtKB" id="P38242"/>
    </source>
</evidence>
<evidence type="ECO:0000255" key="3"/>
<evidence type="ECO:0000305" key="4"/>
<feature type="chain" id="PRO_0000123817" description="UDP-N-acetylglucosamine transferase subunit ALG14">
    <location>
        <begin position="1"/>
        <end position="216"/>
    </location>
</feature>
<feature type="topological domain" description="Lumenal" evidence="2">
    <location>
        <begin position="1"/>
        <end position="4"/>
    </location>
</feature>
<feature type="transmembrane region" description="Helical" evidence="3">
    <location>
        <begin position="5"/>
        <end position="25"/>
    </location>
</feature>
<feature type="topological domain" description="Cytoplasmic" evidence="2">
    <location>
        <begin position="26"/>
        <end position="216"/>
    </location>
</feature>
<gene>
    <name type="primary">ALG14</name>
    <name type="ordered locus">YALI0B11440g</name>
</gene>
<organism>
    <name type="scientific">Yarrowia lipolytica (strain CLIB 122 / E 150)</name>
    <name type="common">Yeast</name>
    <name type="synonym">Candida lipolytica</name>
    <dbReference type="NCBI Taxonomy" id="284591"/>
    <lineage>
        <taxon>Eukaryota</taxon>
        <taxon>Fungi</taxon>
        <taxon>Dikarya</taxon>
        <taxon>Ascomycota</taxon>
        <taxon>Saccharomycotina</taxon>
        <taxon>Dipodascomycetes</taxon>
        <taxon>Dipodascales</taxon>
        <taxon>Dipodascales incertae sedis</taxon>
        <taxon>Yarrowia</taxon>
    </lineage>
</organism>
<comment type="function">
    <text evidence="1">Involved in protein N-glycosylation. Essential for the second step of the dolichol-linked oligosaccharide pathway (By similarity).</text>
</comment>
<comment type="subunit">
    <text evidence="1">Heterodimer with ALG13 to form a functional enzyme.</text>
</comment>
<comment type="subcellular location">
    <subcellularLocation>
        <location evidence="2">Endoplasmic reticulum membrane</location>
        <topology evidence="3">Single-pass membrane protein</topology>
    </subcellularLocation>
    <subcellularLocation>
        <location evidence="2">Nucleus membrane</location>
        <topology evidence="3">Single-pass membrane protein</topology>
    </subcellularLocation>
</comment>
<comment type="similarity">
    <text evidence="4">Belongs to the ALG14 family.</text>
</comment>
<reference key="1">
    <citation type="journal article" date="2004" name="Nature">
        <title>Genome evolution in yeasts.</title>
        <authorList>
            <person name="Dujon B."/>
            <person name="Sherman D."/>
            <person name="Fischer G."/>
            <person name="Durrens P."/>
            <person name="Casaregola S."/>
            <person name="Lafontaine I."/>
            <person name="de Montigny J."/>
            <person name="Marck C."/>
            <person name="Neuveglise C."/>
            <person name="Talla E."/>
            <person name="Goffard N."/>
            <person name="Frangeul L."/>
            <person name="Aigle M."/>
            <person name="Anthouard V."/>
            <person name="Babour A."/>
            <person name="Barbe V."/>
            <person name="Barnay S."/>
            <person name="Blanchin S."/>
            <person name="Beckerich J.-M."/>
            <person name="Beyne E."/>
            <person name="Bleykasten C."/>
            <person name="Boisrame A."/>
            <person name="Boyer J."/>
            <person name="Cattolico L."/>
            <person name="Confanioleri F."/>
            <person name="de Daruvar A."/>
            <person name="Despons L."/>
            <person name="Fabre E."/>
            <person name="Fairhead C."/>
            <person name="Ferry-Dumazet H."/>
            <person name="Groppi A."/>
            <person name="Hantraye F."/>
            <person name="Hennequin C."/>
            <person name="Jauniaux N."/>
            <person name="Joyet P."/>
            <person name="Kachouri R."/>
            <person name="Kerrest A."/>
            <person name="Koszul R."/>
            <person name="Lemaire M."/>
            <person name="Lesur I."/>
            <person name="Ma L."/>
            <person name="Muller H."/>
            <person name="Nicaud J.-M."/>
            <person name="Nikolski M."/>
            <person name="Oztas S."/>
            <person name="Ozier-Kalogeropoulos O."/>
            <person name="Pellenz S."/>
            <person name="Potier S."/>
            <person name="Richard G.-F."/>
            <person name="Straub M.-L."/>
            <person name="Suleau A."/>
            <person name="Swennen D."/>
            <person name="Tekaia F."/>
            <person name="Wesolowski-Louvel M."/>
            <person name="Westhof E."/>
            <person name="Wirth B."/>
            <person name="Zeniou-Meyer M."/>
            <person name="Zivanovic Y."/>
            <person name="Bolotin-Fukuhara M."/>
            <person name="Thierry A."/>
            <person name="Bouchier C."/>
            <person name="Caudron B."/>
            <person name="Scarpelli C."/>
            <person name="Gaillardin C."/>
            <person name="Weissenbach J."/>
            <person name="Wincker P."/>
            <person name="Souciet J.-L."/>
        </authorList>
    </citation>
    <scope>NUCLEOTIDE SEQUENCE [LARGE SCALE GENOMIC DNA]</scope>
    <source>
        <strain>CLIB 122 / E 150</strain>
    </source>
</reference>
<accession>Q6CF02</accession>